<accession>Q0INZ4</accession>
<accession>A0A0P0Y8W6</accession>
<accession>Q2QU65</accession>
<sequence>MAAPSSLASSSHLSRRATAAASPSIPPPSPPPPPQRLRCGWVGRAAPPTRRAPGVCSVVSPSKPGVAAVDVPAATIPDAAATGVGVAERISVSSLLEVVADDLLKLNNNLKSLVGAENPVLVSAAEQIFGAGGKRLRPALVFLVSRATAELAGLLELTTEHQRLAEIIEMIHTASLIHDDVIDDSGMRRGKETIHQLYGTRVAVLAGDFMFAQSSWFLANLENIEVIKLISQVIKDFASGEIKQASTLFDCDITLDDYLLKSYYKTASLIAASTRSAAIFSGVSTAICEQMYEYGRNLGLSFQVVDDILDFTQSAEQLGKPAGSDLAKGNLTAPVIFALQDEPQLREIIDSEFSETNSLATAIELVHRSGGIKRAHELAREKGEIAIQSLQCLPRSEFRSTLENMVKYNLERID</sequence>
<gene>
    <name evidence="8" type="primary">SPS3</name>
    <name evidence="10" type="ordered locus">Os12g0271700</name>
    <name evidence="9" type="ordered locus">LOC_Os12g17320</name>
    <name evidence="9" type="ORF">OsJ_1767i3</name>
</gene>
<comment type="function">
    <text evidence="5">Involved in providing solanesyl diphosphate for plastoquinone-9 (PQ-9) formation.</text>
</comment>
<comment type="catalytic activity">
    <reaction evidence="5">
        <text>7 isopentenyl diphosphate + (2E)-geranyl diphosphate = all-trans-nonaprenyl diphosphate + 7 diphosphate</text>
        <dbReference type="Rhea" id="RHEA:27563"/>
        <dbReference type="ChEBI" id="CHEBI:33019"/>
        <dbReference type="ChEBI" id="CHEBI:58057"/>
        <dbReference type="ChEBI" id="CHEBI:58391"/>
        <dbReference type="ChEBI" id="CHEBI:128769"/>
        <dbReference type="EC" id="2.5.1.84"/>
    </reaction>
</comment>
<comment type="cofactor">
    <cofactor evidence="1">
        <name>Mg(2+)</name>
        <dbReference type="ChEBI" id="CHEBI:18420"/>
    </cofactor>
    <text evidence="1">Binds 2 Mg(2+) ions per subunit.</text>
</comment>
<comment type="subunit">
    <text evidence="4">Homodimer.</text>
</comment>
<comment type="subcellular location">
    <subcellularLocation>
        <location evidence="6">Plastid</location>
        <location evidence="6">Chloroplast</location>
    </subcellularLocation>
</comment>
<comment type="similarity">
    <text evidence="8">Belongs to the FPP/GGPP synthase family.</text>
</comment>
<comment type="sequence caution" evidence="8">
    <conflict type="erroneous gene model prediction">
        <sequence resource="EMBL-CDS" id="ABA97399"/>
    </conflict>
</comment>
<comment type="sequence caution" evidence="8">
    <conflict type="erroneous initiation">
        <sequence resource="EMBL-CDS" id="BAF29571"/>
    </conflict>
    <text>Truncated N-terminus.</text>
</comment>
<comment type="sequence caution" evidence="8">
    <conflict type="erroneous initiation">
        <sequence resource="EMBL-CDS" id="BAT16653"/>
    </conflict>
    <text>Truncated N-terminus.</text>
</comment>
<comment type="sequence caution" evidence="8">
    <conflict type="erroneous gene model prediction">
        <sequence resource="EMBL-CDS" id="EEE62870"/>
    </conflict>
</comment>
<protein>
    <recommendedName>
        <fullName evidence="8">Probable solanesyl-diphosphate synthase 3, chloroplastic</fullName>
        <shortName evidence="8">OsSPS3</shortName>
        <ecNumber evidence="5">2.5.1.84</ecNumber>
    </recommendedName>
    <alternativeName>
        <fullName evidence="8">Probable all-trans-nonaprenyl-diphosphate synthase 3 (geranyl-diphosphate specific)</fullName>
    </alternativeName>
</protein>
<proteinExistence type="inferred from homology"/>
<feature type="transit peptide" description="Chloroplast" evidence="6">
    <location>
        <begin position="1"/>
        <end position="72"/>
    </location>
</feature>
<feature type="chain" id="PRO_0000414853" description="Probable solanesyl-diphosphate synthase 3, chloroplastic" evidence="1">
    <location>
        <begin position="73"/>
        <end position="414"/>
    </location>
</feature>
<feature type="region of interest" description="Disordered" evidence="7">
    <location>
        <begin position="1"/>
        <end position="36"/>
    </location>
</feature>
<feature type="compositionally biased region" description="Low complexity" evidence="7">
    <location>
        <begin position="1"/>
        <end position="23"/>
    </location>
</feature>
<feature type="compositionally biased region" description="Pro residues" evidence="7">
    <location>
        <begin position="24"/>
        <end position="35"/>
    </location>
</feature>
<feature type="binding site" evidence="2">
    <location>
        <position position="134"/>
    </location>
    <ligand>
        <name>isopentenyl diphosphate</name>
        <dbReference type="ChEBI" id="CHEBI:128769"/>
    </ligand>
</feature>
<feature type="binding site" evidence="2">
    <location>
        <position position="137"/>
    </location>
    <ligand>
        <name>isopentenyl diphosphate</name>
        <dbReference type="ChEBI" id="CHEBI:128769"/>
    </ligand>
</feature>
<feature type="binding site" evidence="3">
    <location>
        <position position="172"/>
    </location>
    <ligand>
        <name>isopentenyl diphosphate</name>
        <dbReference type="ChEBI" id="CHEBI:128769"/>
    </ligand>
</feature>
<feature type="binding site" evidence="2">
    <location>
        <position position="179"/>
    </location>
    <ligand>
        <name>Mg(2+)</name>
        <dbReference type="ChEBI" id="CHEBI:18420"/>
        <label>1</label>
    </ligand>
</feature>
<feature type="binding site" evidence="2">
    <location>
        <position position="179"/>
    </location>
    <ligand>
        <name>Mg(2+)</name>
        <dbReference type="ChEBI" id="CHEBI:18420"/>
        <label>2</label>
    </ligand>
</feature>
<feature type="binding site" evidence="2">
    <location>
        <position position="183"/>
    </location>
    <ligand>
        <name>Mg(2+)</name>
        <dbReference type="ChEBI" id="CHEBI:18420"/>
        <label>1</label>
    </ligand>
</feature>
<feature type="binding site" evidence="2">
    <location>
        <position position="183"/>
    </location>
    <ligand>
        <name>Mg(2+)</name>
        <dbReference type="ChEBI" id="CHEBI:18420"/>
        <label>2</label>
    </ligand>
</feature>
<feature type="binding site" evidence="1">
    <location>
        <position position="188"/>
    </location>
    <ligand>
        <name>an all-trans-polyprenyl diphosphate</name>
        <dbReference type="ChEBI" id="CHEBI:58914"/>
    </ligand>
</feature>
<feature type="binding site" evidence="2">
    <location>
        <position position="189"/>
    </location>
    <ligand>
        <name>isopentenyl diphosphate</name>
        <dbReference type="ChEBI" id="CHEBI:128769"/>
    </ligand>
</feature>
<feature type="binding site" evidence="1">
    <location>
        <position position="265"/>
    </location>
    <ligand>
        <name>an all-trans-polyprenyl diphosphate</name>
        <dbReference type="ChEBI" id="CHEBI:58914"/>
    </ligand>
</feature>
<feature type="binding site" evidence="1">
    <location>
        <position position="266"/>
    </location>
    <ligand>
        <name>an all-trans-polyprenyl diphosphate</name>
        <dbReference type="ChEBI" id="CHEBI:58914"/>
    </ligand>
</feature>
<feature type="binding site" evidence="1">
    <location>
        <position position="303"/>
    </location>
    <ligand>
        <name>an all-trans-polyprenyl diphosphate</name>
        <dbReference type="ChEBI" id="CHEBI:58914"/>
    </ligand>
</feature>
<feature type="binding site" evidence="1">
    <location>
        <position position="320"/>
    </location>
    <ligand>
        <name>an all-trans-polyprenyl diphosphate</name>
        <dbReference type="ChEBI" id="CHEBI:58914"/>
    </ligand>
</feature>
<dbReference type="EC" id="2.5.1.84" evidence="5"/>
<dbReference type="EMBL" id="DP000011">
    <property type="protein sequence ID" value="ABA97399.2"/>
    <property type="status" value="ALT_SEQ"/>
    <property type="molecule type" value="Genomic_DNA"/>
</dbReference>
<dbReference type="EMBL" id="AP008218">
    <property type="protein sequence ID" value="BAF29571.1"/>
    <property type="status" value="ALT_INIT"/>
    <property type="molecule type" value="Genomic_DNA"/>
</dbReference>
<dbReference type="EMBL" id="AP014968">
    <property type="protein sequence ID" value="BAT16653.1"/>
    <property type="status" value="ALT_INIT"/>
    <property type="molecule type" value="Genomic_DNA"/>
</dbReference>
<dbReference type="EMBL" id="CM000142">
    <property type="protein sequence ID" value="EEE62870.1"/>
    <property type="status" value="ALT_SEQ"/>
    <property type="molecule type" value="Genomic_DNA"/>
</dbReference>
<dbReference type="SMR" id="Q0INZ4"/>
<dbReference type="FunCoup" id="Q0INZ4">
    <property type="interactions" value="89"/>
</dbReference>
<dbReference type="STRING" id="39947.Q0INZ4"/>
<dbReference type="PaxDb" id="39947-Q0INZ4"/>
<dbReference type="EnsemblPlants" id="Os12t0271700-02">
    <property type="protein sequence ID" value="Os12t0271700-02"/>
    <property type="gene ID" value="Os12g0271700"/>
</dbReference>
<dbReference type="Gramene" id="Os12t0271700-02">
    <property type="protein sequence ID" value="Os12t0271700-02"/>
    <property type="gene ID" value="Os12g0271700"/>
</dbReference>
<dbReference type="KEGG" id="dosa:Os12g0271700"/>
<dbReference type="KEGG" id="osa:4351957"/>
<dbReference type="eggNOG" id="KOG0776">
    <property type="taxonomic scope" value="Eukaryota"/>
</dbReference>
<dbReference type="HOGENOM" id="CLU_014015_2_2_1"/>
<dbReference type="InParanoid" id="Q0INZ4"/>
<dbReference type="OrthoDB" id="9927103at2759"/>
<dbReference type="PlantReactome" id="R-OSA-1119367">
    <property type="pathway name" value="Polyisoprenoid biosynthesis"/>
</dbReference>
<dbReference type="Proteomes" id="UP000000763">
    <property type="component" value="Chromosome 12"/>
</dbReference>
<dbReference type="Proteomes" id="UP000007752">
    <property type="component" value="Chromosome 5"/>
</dbReference>
<dbReference type="Proteomes" id="UP000059680">
    <property type="component" value="Chromosome 12"/>
</dbReference>
<dbReference type="ExpressionAtlas" id="Q0INZ4">
    <property type="expression patterns" value="baseline and differential"/>
</dbReference>
<dbReference type="GO" id="GO:0009507">
    <property type="term" value="C:chloroplast"/>
    <property type="evidence" value="ECO:0000318"/>
    <property type="project" value="GO_Central"/>
</dbReference>
<dbReference type="GO" id="GO:0052923">
    <property type="term" value="F:all-trans-nonaprenyl-diphosphate synthase (geranyl-diphosphate specific) activity"/>
    <property type="evidence" value="ECO:0007669"/>
    <property type="project" value="UniProtKB-EC"/>
</dbReference>
<dbReference type="GO" id="GO:0046872">
    <property type="term" value="F:metal ion binding"/>
    <property type="evidence" value="ECO:0007669"/>
    <property type="project" value="UniProtKB-KW"/>
</dbReference>
<dbReference type="GO" id="GO:0004659">
    <property type="term" value="F:prenyltransferase activity"/>
    <property type="evidence" value="ECO:0000318"/>
    <property type="project" value="GO_Central"/>
</dbReference>
<dbReference type="GO" id="GO:0008299">
    <property type="term" value="P:isoprenoid biosynthetic process"/>
    <property type="evidence" value="ECO:0000318"/>
    <property type="project" value="GO_Central"/>
</dbReference>
<dbReference type="GO" id="GO:0010236">
    <property type="term" value="P:plastoquinone biosynthetic process"/>
    <property type="evidence" value="ECO:0000318"/>
    <property type="project" value="GO_Central"/>
</dbReference>
<dbReference type="CDD" id="cd00685">
    <property type="entry name" value="Trans_IPPS_HT"/>
    <property type="match status" value="1"/>
</dbReference>
<dbReference type="FunFam" id="1.10.600.10:FF:000017">
    <property type="entry name" value="Solanesyl-diphosphate synthase 2, chloroplastic"/>
    <property type="match status" value="1"/>
</dbReference>
<dbReference type="Gene3D" id="1.10.600.10">
    <property type="entry name" value="Farnesyl Diphosphate Synthase"/>
    <property type="match status" value="1"/>
</dbReference>
<dbReference type="InterPro" id="IPR008949">
    <property type="entry name" value="Isoprenoid_synthase_dom_sf"/>
</dbReference>
<dbReference type="InterPro" id="IPR000092">
    <property type="entry name" value="Polyprenyl_synt"/>
</dbReference>
<dbReference type="InterPro" id="IPR033749">
    <property type="entry name" value="Polyprenyl_synt_CS"/>
</dbReference>
<dbReference type="NCBIfam" id="TIGR02749">
    <property type="entry name" value="prenyl_cyano"/>
    <property type="match status" value="1"/>
</dbReference>
<dbReference type="PANTHER" id="PTHR12001">
    <property type="entry name" value="GERANYLGERANYL PYROPHOSPHATE SYNTHASE"/>
    <property type="match status" value="1"/>
</dbReference>
<dbReference type="PANTHER" id="PTHR12001:SF87">
    <property type="entry name" value="SOLANESYL-DIPHOSPHATE SYNTHASE 3, CHLOROPLASTIC-RELATED"/>
    <property type="match status" value="1"/>
</dbReference>
<dbReference type="Pfam" id="PF00348">
    <property type="entry name" value="polyprenyl_synt"/>
    <property type="match status" value="1"/>
</dbReference>
<dbReference type="SFLD" id="SFLDS00005">
    <property type="entry name" value="Isoprenoid_Synthase_Type_I"/>
    <property type="match status" value="1"/>
</dbReference>
<dbReference type="SUPFAM" id="SSF48576">
    <property type="entry name" value="Terpenoid synthases"/>
    <property type="match status" value="1"/>
</dbReference>
<dbReference type="PROSITE" id="PS00723">
    <property type="entry name" value="POLYPRENYL_SYNTHASE_1"/>
    <property type="match status" value="1"/>
</dbReference>
<dbReference type="PROSITE" id="PS00444">
    <property type="entry name" value="POLYPRENYL_SYNTHASE_2"/>
    <property type="match status" value="1"/>
</dbReference>
<evidence type="ECO:0000250" key="1"/>
<evidence type="ECO:0000250" key="2">
    <source>
        <dbReference type="UniProtKB" id="P14324"/>
    </source>
</evidence>
<evidence type="ECO:0000250" key="3">
    <source>
        <dbReference type="UniProtKB" id="Q12051"/>
    </source>
</evidence>
<evidence type="ECO:0000250" key="4">
    <source>
        <dbReference type="UniProtKB" id="Q5HZ00"/>
    </source>
</evidence>
<evidence type="ECO:0000250" key="5">
    <source>
        <dbReference type="UniProtKB" id="Q75HZ9"/>
    </source>
</evidence>
<evidence type="ECO:0000255" key="6"/>
<evidence type="ECO:0000256" key="7">
    <source>
        <dbReference type="SAM" id="MobiDB-lite"/>
    </source>
</evidence>
<evidence type="ECO:0000305" key="8"/>
<evidence type="ECO:0000312" key="9">
    <source>
        <dbReference type="EMBL" id="ABA97399.2"/>
    </source>
</evidence>
<evidence type="ECO:0000312" key="10">
    <source>
        <dbReference type="EMBL" id="BAT16653.1"/>
    </source>
</evidence>
<keyword id="KW-0150">Chloroplast</keyword>
<keyword id="KW-0414">Isoprene biosynthesis</keyword>
<keyword id="KW-0460">Magnesium</keyword>
<keyword id="KW-0479">Metal-binding</keyword>
<keyword id="KW-0934">Plastid</keyword>
<keyword id="KW-1185">Reference proteome</keyword>
<keyword id="KW-0808">Transferase</keyword>
<keyword id="KW-0809">Transit peptide</keyword>
<organism>
    <name type="scientific">Oryza sativa subsp. japonica</name>
    <name type="common">Rice</name>
    <dbReference type="NCBI Taxonomy" id="39947"/>
    <lineage>
        <taxon>Eukaryota</taxon>
        <taxon>Viridiplantae</taxon>
        <taxon>Streptophyta</taxon>
        <taxon>Embryophyta</taxon>
        <taxon>Tracheophyta</taxon>
        <taxon>Spermatophyta</taxon>
        <taxon>Magnoliopsida</taxon>
        <taxon>Liliopsida</taxon>
        <taxon>Poales</taxon>
        <taxon>Poaceae</taxon>
        <taxon>BOP clade</taxon>
        <taxon>Oryzoideae</taxon>
        <taxon>Oryzeae</taxon>
        <taxon>Oryzinae</taxon>
        <taxon>Oryza</taxon>
        <taxon>Oryza sativa</taxon>
    </lineage>
</organism>
<name>SPS3_ORYSJ</name>
<reference key="1">
    <citation type="journal article" date="2005" name="BMC Biol.">
        <title>The sequence of rice chromosomes 11 and 12, rich in disease resistance genes and recent gene duplications.</title>
        <authorList>
            <consortium name="The rice chromosomes 11 and 12 sequencing consortia"/>
        </authorList>
    </citation>
    <scope>NUCLEOTIDE SEQUENCE [LARGE SCALE GENOMIC DNA]</scope>
    <source>
        <strain>cv. Nipponbare</strain>
    </source>
</reference>
<reference key="2">
    <citation type="journal article" date="2005" name="Nature">
        <title>The map-based sequence of the rice genome.</title>
        <authorList>
            <consortium name="International rice genome sequencing project (IRGSP)"/>
        </authorList>
    </citation>
    <scope>NUCLEOTIDE SEQUENCE [LARGE SCALE GENOMIC DNA]</scope>
    <source>
        <strain>cv. Nipponbare</strain>
    </source>
</reference>
<reference key="3">
    <citation type="journal article" date="2008" name="Nucleic Acids Res.">
        <title>The rice annotation project database (RAP-DB): 2008 update.</title>
        <authorList>
            <consortium name="The rice annotation project (RAP)"/>
        </authorList>
    </citation>
    <scope>GENOME REANNOTATION</scope>
    <source>
        <strain>cv. Nipponbare</strain>
    </source>
</reference>
<reference key="4">
    <citation type="journal article" date="2013" name="Rice">
        <title>Improvement of the Oryza sativa Nipponbare reference genome using next generation sequence and optical map data.</title>
        <authorList>
            <person name="Kawahara Y."/>
            <person name="de la Bastide M."/>
            <person name="Hamilton J.P."/>
            <person name="Kanamori H."/>
            <person name="McCombie W.R."/>
            <person name="Ouyang S."/>
            <person name="Schwartz D.C."/>
            <person name="Tanaka T."/>
            <person name="Wu J."/>
            <person name="Zhou S."/>
            <person name="Childs K.L."/>
            <person name="Davidson R.M."/>
            <person name="Lin H."/>
            <person name="Quesada-Ocampo L."/>
            <person name="Vaillancourt B."/>
            <person name="Sakai H."/>
            <person name="Lee S.S."/>
            <person name="Kim J."/>
            <person name="Numa H."/>
            <person name="Itoh T."/>
            <person name="Buell C.R."/>
            <person name="Matsumoto T."/>
        </authorList>
    </citation>
    <scope>GENOME REANNOTATION</scope>
    <source>
        <strain>cv. Nipponbare</strain>
    </source>
</reference>
<reference key="5">
    <citation type="journal article" date="2005" name="PLoS Biol.">
        <title>The genomes of Oryza sativa: a history of duplications.</title>
        <authorList>
            <person name="Yu J."/>
            <person name="Wang J."/>
            <person name="Lin W."/>
            <person name="Li S."/>
            <person name="Li H."/>
            <person name="Zhou J."/>
            <person name="Ni P."/>
            <person name="Dong W."/>
            <person name="Hu S."/>
            <person name="Zeng C."/>
            <person name="Zhang J."/>
            <person name="Zhang Y."/>
            <person name="Li R."/>
            <person name="Xu Z."/>
            <person name="Li S."/>
            <person name="Li X."/>
            <person name="Zheng H."/>
            <person name="Cong L."/>
            <person name="Lin L."/>
            <person name="Yin J."/>
            <person name="Geng J."/>
            <person name="Li G."/>
            <person name="Shi J."/>
            <person name="Liu J."/>
            <person name="Lv H."/>
            <person name="Li J."/>
            <person name="Wang J."/>
            <person name="Deng Y."/>
            <person name="Ran L."/>
            <person name="Shi X."/>
            <person name="Wang X."/>
            <person name="Wu Q."/>
            <person name="Li C."/>
            <person name="Ren X."/>
            <person name="Wang J."/>
            <person name="Wang X."/>
            <person name="Li D."/>
            <person name="Liu D."/>
            <person name="Zhang X."/>
            <person name="Ji Z."/>
            <person name="Zhao W."/>
            <person name="Sun Y."/>
            <person name="Zhang Z."/>
            <person name="Bao J."/>
            <person name="Han Y."/>
            <person name="Dong L."/>
            <person name="Ji J."/>
            <person name="Chen P."/>
            <person name="Wu S."/>
            <person name="Liu J."/>
            <person name="Xiao Y."/>
            <person name="Bu D."/>
            <person name="Tan J."/>
            <person name="Yang L."/>
            <person name="Ye C."/>
            <person name="Zhang J."/>
            <person name="Xu J."/>
            <person name="Zhou Y."/>
            <person name="Yu Y."/>
            <person name="Zhang B."/>
            <person name="Zhuang S."/>
            <person name="Wei H."/>
            <person name="Liu B."/>
            <person name="Lei M."/>
            <person name="Yu H."/>
            <person name="Li Y."/>
            <person name="Xu H."/>
            <person name="Wei S."/>
            <person name="He X."/>
            <person name="Fang L."/>
            <person name="Zhang Z."/>
            <person name="Zhang Y."/>
            <person name="Huang X."/>
            <person name="Su Z."/>
            <person name="Tong W."/>
            <person name="Li J."/>
            <person name="Tong Z."/>
            <person name="Li S."/>
            <person name="Ye J."/>
            <person name="Wang L."/>
            <person name="Fang L."/>
            <person name="Lei T."/>
            <person name="Chen C.-S."/>
            <person name="Chen H.-C."/>
            <person name="Xu Z."/>
            <person name="Li H."/>
            <person name="Huang H."/>
            <person name="Zhang F."/>
            <person name="Xu H."/>
            <person name="Li N."/>
            <person name="Zhao C."/>
            <person name="Li S."/>
            <person name="Dong L."/>
            <person name="Huang Y."/>
            <person name="Li L."/>
            <person name="Xi Y."/>
            <person name="Qi Q."/>
            <person name="Li W."/>
            <person name="Zhang B."/>
            <person name="Hu W."/>
            <person name="Zhang Y."/>
            <person name="Tian X."/>
            <person name="Jiao Y."/>
            <person name="Liang X."/>
            <person name="Jin J."/>
            <person name="Gao L."/>
            <person name="Zheng W."/>
            <person name="Hao B."/>
            <person name="Liu S.-M."/>
            <person name="Wang W."/>
            <person name="Yuan L."/>
            <person name="Cao M."/>
            <person name="McDermott J."/>
            <person name="Samudrala R."/>
            <person name="Wang J."/>
            <person name="Wong G.K.-S."/>
            <person name="Yang H."/>
        </authorList>
    </citation>
    <scope>NUCLEOTIDE SEQUENCE [LARGE SCALE GENOMIC DNA]</scope>
    <source>
        <strain>cv. Nipponbare</strain>
    </source>
</reference>